<dbReference type="EMBL" id="CP001019">
    <property type="protein sequence ID" value="ACJ19050.1"/>
    <property type="molecule type" value="Genomic_DNA"/>
</dbReference>
<dbReference type="EMBL" id="U86688">
    <property type="protein sequence ID" value="AAC61665.1"/>
    <property type="status" value="ALT_FRAME"/>
    <property type="molecule type" value="Genomic_DNA"/>
</dbReference>
<dbReference type="RefSeq" id="WP_005771617.1">
    <property type="nucleotide sequence ID" value="NC_011527.1"/>
</dbReference>
<dbReference type="SMR" id="B6J272"/>
<dbReference type="KEGG" id="cbg:CbuG_1776"/>
<dbReference type="HOGENOM" id="CLU_086499_3_2_6"/>
<dbReference type="GO" id="GO:0022625">
    <property type="term" value="C:cytosolic large ribosomal subunit"/>
    <property type="evidence" value="ECO:0007669"/>
    <property type="project" value="TreeGrafter"/>
</dbReference>
<dbReference type="GO" id="GO:0003729">
    <property type="term" value="F:mRNA binding"/>
    <property type="evidence" value="ECO:0007669"/>
    <property type="project" value="TreeGrafter"/>
</dbReference>
<dbReference type="GO" id="GO:0003735">
    <property type="term" value="F:structural constituent of ribosome"/>
    <property type="evidence" value="ECO:0007669"/>
    <property type="project" value="InterPro"/>
</dbReference>
<dbReference type="GO" id="GO:0006412">
    <property type="term" value="P:translation"/>
    <property type="evidence" value="ECO:0007669"/>
    <property type="project" value="UniProtKB-UniRule"/>
</dbReference>
<dbReference type="CDD" id="cd00387">
    <property type="entry name" value="Ribosomal_L7_L12"/>
    <property type="match status" value="1"/>
</dbReference>
<dbReference type="FunFam" id="3.30.1390.10:FF:000001">
    <property type="entry name" value="50S ribosomal protein L7/L12"/>
    <property type="match status" value="1"/>
</dbReference>
<dbReference type="Gene3D" id="3.30.1390.10">
    <property type="match status" value="1"/>
</dbReference>
<dbReference type="Gene3D" id="1.20.5.710">
    <property type="entry name" value="Single helix bin"/>
    <property type="match status" value="1"/>
</dbReference>
<dbReference type="HAMAP" id="MF_00368">
    <property type="entry name" value="Ribosomal_bL12"/>
    <property type="match status" value="1"/>
</dbReference>
<dbReference type="InterPro" id="IPR000206">
    <property type="entry name" value="Ribosomal_bL12"/>
</dbReference>
<dbReference type="InterPro" id="IPR013823">
    <property type="entry name" value="Ribosomal_bL12_C"/>
</dbReference>
<dbReference type="InterPro" id="IPR014719">
    <property type="entry name" value="Ribosomal_bL12_C/ClpS-like"/>
</dbReference>
<dbReference type="InterPro" id="IPR008932">
    <property type="entry name" value="Ribosomal_bL12_oligo"/>
</dbReference>
<dbReference type="InterPro" id="IPR036235">
    <property type="entry name" value="Ribosomal_bL12_oligo_N_sf"/>
</dbReference>
<dbReference type="NCBIfam" id="TIGR00855">
    <property type="entry name" value="L12"/>
    <property type="match status" value="1"/>
</dbReference>
<dbReference type="PANTHER" id="PTHR45987">
    <property type="entry name" value="39S RIBOSOMAL PROTEIN L12"/>
    <property type="match status" value="1"/>
</dbReference>
<dbReference type="PANTHER" id="PTHR45987:SF4">
    <property type="entry name" value="LARGE RIBOSOMAL SUBUNIT PROTEIN BL12M"/>
    <property type="match status" value="1"/>
</dbReference>
<dbReference type="Pfam" id="PF00542">
    <property type="entry name" value="Ribosomal_L12"/>
    <property type="match status" value="1"/>
</dbReference>
<dbReference type="Pfam" id="PF16320">
    <property type="entry name" value="Ribosomal_L12_N"/>
    <property type="match status" value="1"/>
</dbReference>
<dbReference type="SUPFAM" id="SSF54736">
    <property type="entry name" value="ClpS-like"/>
    <property type="match status" value="1"/>
</dbReference>
<dbReference type="SUPFAM" id="SSF48300">
    <property type="entry name" value="Ribosomal protein L7/12, oligomerisation (N-terminal) domain"/>
    <property type="match status" value="1"/>
</dbReference>
<evidence type="ECO:0000255" key="1">
    <source>
        <dbReference type="HAMAP-Rule" id="MF_00368"/>
    </source>
</evidence>
<evidence type="ECO:0000305" key="2"/>
<reference key="1">
    <citation type="journal article" date="2009" name="Infect. Immun.">
        <title>Comparative genomics reveal extensive transposon-mediated genomic plasticity and diversity among potential effector proteins within the genus Coxiella.</title>
        <authorList>
            <person name="Beare P.A."/>
            <person name="Unsworth N."/>
            <person name="Andoh M."/>
            <person name="Voth D.E."/>
            <person name="Omsland A."/>
            <person name="Gilk S.D."/>
            <person name="Williams K.P."/>
            <person name="Sobral B.W."/>
            <person name="Kupko J.J. III"/>
            <person name="Porcella S.F."/>
            <person name="Samuel J.E."/>
            <person name="Heinzen R.A."/>
        </authorList>
    </citation>
    <scope>NUCLEOTIDE SEQUENCE [LARGE SCALE GENOMIC DNA]</scope>
    <source>
        <strain>CbuG_Q212</strain>
    </source>
</reference>
<reference key="2">
    <citation type="journal article" date="1998" name="Gene">
        <title>Determination of Coxiella burnetii rpoB sequence and its use for phylogenetic analysis.</title>
        <authorList>
            <person name="Mollet C."/>
            <person name="Drancourt M."/>
            <person name="Raoult D."/>
        </authorList>
    </citation>
    <scope>NUCLEOTIDE SEQUENCE [GENOMIC DNA] OF 92-126</scope>
</reference>
<proteinExistence type="inferred from homology"/>
<sequence length="126" mass="13248">MAQLSKDDILEAVANMSVMDVVDLVKAMEEKFGVSAQAAIAVAGPVAGGEAAAAEEKTEFNVKMVSFGDNKIGVIKAIRTITGLGLKEAKDLVESVPSVVKESVSKEEAEKIKKELEEAGAKVELE</sequence>
<feature type="chain" id="PRO_0000366030" description="Large ribosomal subunit protein bL12">
    <location>
        <begin position="1"/>
        <end position="126"/>
    </location>
</feature>
<feature type="sequence conflict" description="In Ref. 2; AAC61665." evidence="2" ref="2">
    <original>IKKE</original>
    <variation>LRKS</variation>
    <location>
        <begin position="112"/>
        <end position="115"/>
    </location>
</feature>
<comment type="function">
    <text evidence="1">Forms part of the ribosomal stalk which helps the ribosome interact with GTP-bound translation factors. Is thus essential for accurate translation.</text>
</comment>
<comment type="subunit">
    <text evidence="1">Homodimer. Part of the ribosomal stalk of the 50S ribosomal subunit. Forms a multimeric L10(L12)X complex, where L10 forms an elongated spine to which 2 to 4 L12 dimers bind in a sequential fashion. Binds GTP-bound translation factors.</text>
</comment>
<comment type="similarity">
    <text evidence="1">Belongs to the bacterial ribosomal protein bL12 family.</text>
</comment>
<comment type="sequence caution" evidence="2">
    <conflict type="frameshift">
        <sequence resource="EMBL-CDS" id="AAC61665"/>
    </conflict>
</comment>
<gene>
    <name evidence="1" type="primary">rplL</name>
    <name type="ordered locus">CbuG_1776</name>
</gene>
<protein>
    <recommendedName>
        <fullName evidence="1">Large ribosomal subunit protein bL12</fullName>
    </recommendedName>
    <alternativeName>
        <fullName evidence="2">50S ribosomal protein L7/L12</fullName>
    </alternativeName>
</protein>
<keyword id="KW-0687">Ribonucleoprotein</keyword>
<keyword id="KW-0689">Ribosomal protein</keyword>
<organism>
    <name type="scientific">Coxiella burnetii (strain CbuG_Q212)</name>
    <name type="common">Coxiella burnetii (strain Q212)</name>
    <dbReference type="NCBI Taxonomy" id="434923"/>
    <lineage>
        <taxon>Bacteria</taxon>
        <taxon>Pseudomonadati</taxon>
        <taxon>Pseudomonadota</taxon>
        <taxon>Gammaproteobacteria</taxon>
        <taxon>Legionellales</taxon>
        <taxon>Coxiellaceae</taxon>
        <taxon>Coxiella</taxon>
    </lineage>
</organism>
<name>RL7_COXB2</name>
<accession>B6J272</accession>
<accession>O87902</accession>